<reference key="1">
    <citation type="journal article" date="2009" name="Genome Res.">
        <title>Comparative genomic analyses of the human fungal pathogens Coccidioides and their relatives.</title>
        <authorList>
            <person name="Sharpton T.J."/>
            <person name="Stajich J.E."/>
            <person name="Rounsley S.D."/>
            <person name="Gardner M.J."/>
            <person name="Wortman J.R."/>
            <person name="Jordar V.S."/>
            <person name="Maiti R."/>
            <person name="Kodira C.D."/>
            <person name="Neafsey D.E."/>
            <person name="Zeng Q."/>
            <person name="Hung C.-Y."/>
            <person name="McMahan C."/>
            <person name="Muszewska A."/>
            <person name="Grynberg M."/>
            <person name="Mandel M.A."/>
            <person name="Kellner E.M."/>
            <person name="Barker B.M."/>
            <person name="Galgiani J.N."/>
            <person name="Orbach M.J."/>
            <person name="Kirkland T.N."/>
            <person name="Cole G.T."/>
            <person name="Henn M.R."/>
            <person name="Birren B.W."/>
            <person name="Taylor J.W."/>
        </authorList>
    </citation>
    <scope>NUCLEOTIDE SEQUENCE [LARGE SCALE GENOMIC DNA]</scope>
    <source>
        <strain>NAm1 / WU24</strain>
    </source>
</reference>
<feature type="chain" id="PRO_0000339431" description="Nuclear protein localization protein 4">
    <location>
        <begin position="1"/>
        <end position="642"/>
    </location>
</feature>
<feature type="domain" description="MPN" evidence="2">
    <location>
        <begin position="270"/>
        <end position="418"/>
    </location>
</feature>
<feature type="region of interest" description="Disordered" evidence="3">
    <location>
        <begin position="95"/>
        <end position="140"/>
    </location>
</feature>
<feature type="region of interest" description="Disordered" evidence="3">
    <location>
        <begin position="592"/>
        <end position="642"/>
    </location>
</feature>
<feature type="compositionally biased region" description="Low complexity" evidence="3">
    <location>
        <begin position="97"/>
        <end position="108"/>
    </location>
</feature>
<feature type="compositionally biased region" description="Polar residues" evidence="3">
    <location>
        <begin position="601"/>
        <end position="611"/>
    </location>
</feature>
<feature type="compositionally biased region" description="Basic and acidic residues" evidence="3">
    <location>
        <begin position="621"/>
        <end position="633"/>
    </location>
</feature>
<accession>A6R538</accession>
<keyword id="KW-0963">Cytoplasm</keyword>
<keyword id="KW-0256">Endoplasmic reticulum</keyword>
<keyword id="KW-0472">Membrane</keyword>
<keyword id="KW-0509">mRNA transport</keyword>
<keyword id="KW-0539">Nucleus</keyword>
<keyword id="KW-0653">Protein transport</keyword>
<keyword id="KW-1185">Reference proteome</keyword>
<keyword id="KW-0811">Translocation</keyword>
<keyword id="KW-0813">Transport</keyword>
<name>NPL4_AJECN</name>
<proteinExistence type="inferred from homology"/>
<gene>
    <name type="primary">NPL4</name>
    <name type="ORF">HCAG_04746</name>
</gene>
<sequence length="642" mass="71205">MAPARPILLRFESRNGQFRLTVNPTDEFPSLLPKVLDNLPKNTAPPSIVLSNKPIGTGGQERNISTLKGVTIQRVGLSHGDKLFIGYEEETAVVNGSSSEHPSSISKSQNAPRRLDGVAVRQQEQAPPVPTPTSETLIKNPWEAVKQSPLDDRLDRKDGKISRGLDHKMCRHGPKGMCDYCMPLEPYAPEYLAEKKIKHLSFHSYLRKINSSTNKPELKSSYIPPLSEPDYRVKRDCPSGHPAWPEGICTKCQPSAITLQPQPFRMVDHVEFSSPDLINSLLDFWRKSGTQRLGFLYGTYEEYTEVPLGIKAVVQAIYEPPQVGEVDGVTLHEWGNEKDVDEVAKFCGLEKIGVIFTDLLDAGAGDEIVFAAQLQARYPKATKWSETGRFGSNFVTCVLSGDEDGAISISAYQASNSAVEMVKADIIEPSADPGVMLVQQENHSDDDASKARYIPEVFYRKVNEYGANVQENAKPSFPVEYLLVTLTHGFPTDPDVMFNNSTFPIENREVIGESQDLRMLADKLVSHGDPNKTICGVSDFHLLCFLNSLGILNKDEEFLLCTVARSHDTADGMQLINTSGWATLVTILQESGERPPKRSWPFQSQTFISSHQRSKHPQAPKSEHPQSDSEQLAKRFKGASLG</sequence>
<organism>
    <name type="scientific">Ajellomyces capsulatus (strain NAm1 / WU24)</name>
    <name type="common">Darling's disease fungus</name>
    <name type="synonym">Histoplasma capsulatum</name>
    <dbReference type="NCBI Taxonomy" id="2059318"/>
    <lineage>
        <taxon>Eukaryota</taxon>
        <taxon>Fungi</taxon>
        <taxon>Dikarya</taxon>
        <taxon>Ascomycota</taxon>
        <taxon>Pezizomycotina</taxon>
        <taxon>Eurotiomycetes</taxon>
        <taxon>Eurotiomycetidae</taxon>
        <taxon>Onygenales</taxon>
        <taxon>Ajellomycetaceae</taxon>
        <taxon>Histoplasma</taxon>
    </lineage>
</organism>
<comment type="function">
    <text evidence="1">Involved in the import of nuclear-targeted proteins into the nucleus and the export of poly(A) RNA out of the nucleus. Has a role in the endoplasmic reticulum-associated degradation (ERAD) pathway (By similarity).</text>
</comment>
<comment type="subcellular location">
    <subcellularLocation>
        <location evidence="1">Cytoplasm</location>
        <location evidence="1">Perinuclear region</location>
    </subcellularLocation>
    <subcellularLocation>
        <location evidence="1">Endoplasmic reticulum membrane</location>
        <topology evidence="1">Peripheral membrane protein</topology>
        <orientation evidence="1">Cytoplasmic side</orientation>
    </subcellularLocation>
    <subcellularLocation>
        <location evidence="1">Nucleus membrane</location>
        <topology evidence="1">Peripheral membrane protein</topology>
        <orientation evidence="1">Cytoplasmic side</orientation>
    </subcellularLocation>
    <text evidence="1">Localizes mainly at the nuclear periphery and the endoplasmic reticulum membrane.</text>
</comment>
<comment type="similarity">
    <text evidence="4">Belongs to the NPL4 family.</text>
</comment>
<evidence type="ECO:0000250" key="1"/>
<evidence type="ECO:0000255" key="2">
    <source>
        <dbReference type="PROSITE-ProRule" id="PRU01182"/>
    </source>
</evidence>
<evidence type="ECO:0000256" key="3">
    <source>
        <dbReference type="SAM" id="MobiDB-lite"/>
    </source>
</evidence>
<evidence type="ECO:0000305" key="4"/>
<protein>
    <recommendedName>
        <fullName>Nuclear protein localization protein 4</fullName>
    </recommendedName>
</protein>
<dbReference type="EMBL" id="CH476658">
    <property type="protein sequence ID" value="EDN08236.1"/>
    <property type="molecule type" value="Genomic_DNA"/>
</dbReference>
<dbReference type="SMR" id="A6R538"/>
<dbReference type="STRING" id="339724.A6R538"/>
<dbReference type="KEGG" id="aje:HCAG_04746"/>
<dbReference type="VEuPathDB" id="FungiDB:HCAG_04746"/>
<dbReference type="HOGENOM" id="CLU_017172_0_0_1"/>
<dbReference type="OMA" id="KWSRTGR"/>
<dbReference type="OrthoDB" id="1123at299071"/>
<dbReference type="Proteomes" id="UP000009297">
    <property type="component" value="Unassembled WGS sequence"/>
</dbReference>
<dbReference type="GO" id="GO:0005789">
    <property type="term" value="C:endoplasmic reticulum membrane"/>
    <property type="evidence" value="ECO:0007669"/>
    <property type="project" value="UniProtKB-SubCell"/>
</dbReference>
<dbReference type="GO" id="GO:0031965">
    <property type="term" value="C:nuclear membrane"/>
    <property type="evidence" value="ECO:0007669"/>
    <property type="project" value="UniProtKB-SubCell"/>
</dbReference>
<dbReference type="GO" id="GO:0048471">
    <property type="term" value="C:perinuclear region of cytoplasm"/>
    <property type="evidence" value="ECO:0007669"/>
    <property type="project" value="UniProtKB-SubCell"/>
</dbReference>
<dbReference type="GO" id="GO:0043130">
    <property type="term" value="F:ubiquitin binding"/>
    <property type="evidence" value="ECO:0007669"/>
    <property type="project" value="TreeGrafter"/>
</dbReference>
<dbReference type="GO" id="GO:0031625">
    <property type="term" value="F:ubiquitin protein ligase binding"/>
    <property type="evidence" value="ECO:0007669"/>
    <property type="project" value="TreeGrafter"/>
</dbReference>
<dbReference type="GO" id="GO:0051028">
    <property type="term" value="P:mRNA transport"/>
    <property type="evidence" value="ECO:0007669"/>
    <property type="project" value="UniProtKB-KW"/>
</dbReference>
<dbReference type="GO" id="GO:0015031">
    <property type="term" value="P:protein transport"/>
    <property type="evidence" value="ECO:0007669"/>
    <property type="project" value="UniProtKB-KW"/>
</dbReference>
<dbReference type="GO" id="GO:0006511">
    <property type="term" value="P:ubiquitin-dependent protein catabolic process"/>
    <property type="evidence" value="ECO:0007669"/>
    <property type="project" value="InterPro"/>
</dbReference>
<dbReference type="CDD" id="cd08061">
    <property type="entry name" value="MPN_NPL4"/>
    <property type="match status" value="1"/>
</dbReference>
<dbReference type="Gene3D" id="3.40.140.10">
    <property type="entry name" value="Cytidine Deaminase, domain 2"/>
    <property type="match status" value="1"/>
</dbReference>
<dbReference type="Gene3D" id="3.10.20.90">
    <property type="entry name" value="Phosphatidylinositol 3-kinase Catalytic Subunit, Chain A, domain 1"/>
    <property type="match status" value="1"/>
</dbReference>
<dbReference type="InterPro" id="IPR037518">
    <property type="entry name" value="MPN"/>
</dbReference>
<dbReference type="InterPro" id="IPR016563">
    <property type="entry name" value="Npl4"/>
</dbReference>
<dbReference type="InterPro" id="IPR007717">
    <property type="entry name" value="NPL4_C"/>
</dbReference>
<dbReference type="InterPro" id="IPR007716">
    <property type="entry name" value="NPL4_Zn-bd_put"/>
</dbReference>
<dbReference type="InterPro" id="IPR029071">
    <property type="entry name" value="Ubiquitin-like_domsf"/>
</dbReference>
<dbReference type="PANTHER" id="PTHR12710">
    <property type="entry name" value="NUCLEAR PROTEIN LOCALIZATION 4"/>
    <property type="match status" value="1"/>
</dbReference>
<dbReference type="PANTHER" id="PTHR12710:SF0">
    <property type="entry name" value="NUCLEAR PROTEIN LOCALIZATION PROTEIN 4 HOMOLOG"/>
    <property type="match status" value="1"/>
</dbReference>
<dbReference type="Pfam" id="PF05021">
    <property type="entry name" value="NPL4"/>
    <property type="match status" value="1"/>
</dbReference>
<dbReference type="Pfam" id="PF05020">
    <property type="entry name" value="zf-NPL4"/>
    <property type="match status" value="1"/>
</dbReference>
<dbReference type="PIRSF" id="PIRSF010052">
    <property type="entry name" value="Polyub_prc_Npl4"/>
    <property type="match status" value="1"/>
</dbReference>
<dbReference type="SUPFAM" id="SSF54236">
    <property type="entry name" value="Ubiquitin-like"/>
    <property type="match status" value="1"/>
</dbReference>
<dbReference type="PROSITE" id="PS50249">
    <property type="entry name" value="MPN"/>
    <property type="match status" value="1"/>
</dbReference>